<evidence type="ECO:0000250" key="1"/>
<evidence type="ECO:0000255" key="2">
    <source>
        <dbReference type="HAMAP-Rule" id="MF_01057"/>
    </source>
</evidence>
<sequence>MTDTAENQTQNNWQAEHPRSIRSFVLRQSHMTAAQQRAIDTLWDSFGIDYQATPADLDANFGSNRPKILEIGFGMGTATAEIARRLPETDFLAIDVHGPGVGNLLKLINENHLENIRVMRHDAVEVIENMLQDGSLDGIHIFFPDPWHKKRHHKRRLIQAPFIAKLLPKLKTGGYIHLATDWEEYARQMLEVLSSFDSLQNTAADYAPTPDYRPETKFEARGKRLGHGVWDLVFKRMG</sequence>
<feature type="chain" id="PRO_0000288187" description="tRNA (guanine-N(7)-)-methyltransferase">
    <location>
        <begin position="1"/>
        <end position="238"/>
    </location>
</feature>
<feature type="active site" evidence="1">
    <location>
        <position position="145"/>
    </location>
</feature>
<feature type="binding site" evidence="2">
    <location>
        <position position="70"/>
    </location>
    <ligand>
        <name>S-adenosyl-L-methionine</name>
        <dbReference type="ChEBI" id="CHEBI:59789"/>
    </ligand>
</feature>
<feature type="binding site" evidence="2">
    <location>
        <position position="95"/>
    </location>
    <ligand>
        <name>S-adenosyl-L-methionine</name>
        <dbReference type="ChEBI" id="CHEBI:59789"/>
    </ligand>
</feature>
<feature type="binding site" evidence="2">
    <location>
        <position position="122"/>
    </location>
    <ligand>
        <name>S-adenosyl-L-methionine</name>
        <dbReference type="ChEBI" id="CHEBI:59789"/>
    </ligand>
</feature>
<feature type="binding site" evidence="2">
    <location>
        <position position="145"/>
    </location>
    <ligand>
        <name>S-adenosyl-L-methionine</name>
        <dbReference type="ChEBI" id="CHEBI:59789"/>
    </ligand>
</feature>
<feature type="binding site" evidence="2">
    <location>
        <position position="149"/>
    </location>
    <ligand>
        <name>substrate</name>
    </ligand>
</feature>
<feature type="binding site" evidence="2">
    <location>
        <position position="181"/>
    </location>
    <ligand>
        <name>substrate</name>
    </ligand>
</feature>
<feature type="binding site" evidence="2">
    <location>
        <begin position="216"/>
        <end position="219"/>
    </location>
    <ligand>
        <name>substrate</name>
    </ligand>
</feature>
<organism>
    <name type="scientific">Neisseria meningitidis serogroup C / serotype 2a (strain ATCC 700532 / DSM 15464 / FAM18)</name>
    <dbReference type="NCBI Taxonomy" id="272831"/>
    <lineage>
        <taxon>Bacteria</taxon>
        <taxon>Pseudomonadati</taxon>
        <taxon>Pseudomonadota</taxon>
        <taxon>Betaproteobacteria</taxon>
        <taxon>Neisseriales</taxon>
        <taxon>Neisseriaceae</taxon>
        <taxon>Neisseria</taxon>
    </lineage>
</organism>
<name>TRMB_NEIMF</name>
<proteinExistence type="inferred from homology"/>
<comment type="function">
    <text evidence="2">Catalyzes the formation of N(7)-methylguanine at position 46 (m7G46) in tRNA.</text>
</comment>
<comment type="catalytic activity">
    <reaction evidence="2">
        <text>guanosine(46) in tRNA + S-adenosyl-L-methionine = N(7)-methylguanosine(46) in tRNA + S-adenosyl-L-homocysteine</text>
        <dbReference type="Rhea" id="RHEA:42708"/>
        <dbReference type="Rhea" id="RHEA-COMP:10188"/>
        <dbReference type="Rhea" id="RHEA-COMP:10189"/>
        <dbReference type="ChEBI" id="CHEBI:57856"/>
        <dbReference type="ChEBI" id="CHEBI:59789"/>
        <dbReference type="ChEBI" id="CHEBI:74269"/>
        <dbReference type="ChEBI" id="CHEBI:74480"/>
        <dbReference type="EC" id="2.1.1.33"/>
    </reaction>
</comment>
<comment type="pathway">
    <text evidence="2">tRNA modification; N(7)-methylguanine-tRNA biosynthesis.</text>
</comment>
<comment type="similarity">
    <text evidence="2">Belongs to the class I-like SAM-binding methyltransferase superfamily. TrmB family.</text>
</comment>
<protein>
    <recommendedName>
        <fullName evidence="2">tRNA (guanine-N(7)-)-methyltransferase</fullName>
        <ecNumber evidence="2">2.1.1.33</ecNumber>
    </recommendedName>
    <alternativeName>
        <fullName evidence="2">tRNA (guanine(46)-N(7))-methyltransferase</fullName>
    </alternativeName>
    <alternativeName>
        <fullName evidence="2">tRNA(m7G46)-methyltransferase</fullName>
    </alternativeName>
</protein>
<dbReference type="EC" id="2.1.1.33" evidence="2"/>
<dbReference type="EMBL" id="AM421808">
    <property type="protein sequence ID" value="CAM10498.1"/>
    <property type="molecule type" value="Genomic_DNA"/>
</dbReference>
<dbReference type="RefSeq" id="WP_002220858.1">
    <property type="nucleotide sequence ID" value="NC_008767.1"/>
</dbReference>
<dbReference type="SMR" id="A1KUF5"/>
<dbReference type="KEGG" id="nmc:NMC1267"/>
<dbReference type="HOGENOM" id="CLU_050910_0_1_4"/>
<dbReference type="UniPathway" id="UPA00989"/>
<dbReference type="Proteomes" id="UP000002286">
    <property type="component" value="Chromosome"/>
</dbReference>
<dbReference type="GO" id="GO:0043527">
    <property type="term" value="C:tRNA methyltransferase complex"/>
    <property type="evidence" value="ECO:0007669"/>
    <property type="project" value="TreeGrafter"/>
</dbReference>
<dbReference type="GO" id="GO:0008176">
    <property type="term" value="F:tRNA (guanine(46)-N7)-methyltransferase activity"/>
    <property type="evidence" value="ECO:0007669"/>
    <property type="project" value="UniProtKB-UniRule"/>
</dbReference>
<dbReference type="CDD" id="cd02440">
    <property type="entry name" value="AdoMet_MTases"/>
    <property type="match status" value="1"/>
</dbReference>
<dbReference type="FunFam" id="3.40.50.150:FF:000035">
    <property type="entry name" value="tRNA (guanine-N(7)-)-methyltransferase"/>
    <property type="match status" value="1"/>
</dbReference>
<dbReference type="Gene3D" id="3.40.50.150">
    <property type="entry name" value="Vaccinia Virus protein VP39"/>
    <property type="match status" value="1"/>
</dbReference>
<dbReference type="HAMAP" id="MF_01057">
    <property type="entry name" value="tRNA_methyltr_TrmB"/>
    <property type="match status" value="1"/>
</dbReference>
<dbReference type="InterPro" id="IPR029063">
    <property type="entry name" value="SAM-dependent_MTases_sf"/>
</dbReference>
<dbReference type="InterPro" id="IPR003358">
    <property type="entry name" value="tRNA_(Gua-N-7)_MeTrfase_Trmb"/>
</dbReference>
<dbReference type="InterPro" id="IPR055361">
    <property type="entry name" value="tRNA_methyltr_TrmB_bact"/>
</dbReference>
<dbReference type="NCBIfam" id="TIGR00091">
    <property type="entry name" value="tRNA (guanosine(46)-N7)-methyltransferase TrmB"/>
    <property type="match status" value="1"/>
</dbReference>
<dbReference type="PANTHER" id="PTHR23417">
    <property type="entry name" value="3-DEOXY-D-MANNO-OCTULOSONIC-ACID TRANSFERASE/TRNA GUANINE-N 7 - -METHYLTRANSFERASE"/>
    <property type="match status" value="1"/>
</dbReference>
<dbReference type="PANTHER" id="PTHR23417:SF14">
    <property type="entry name" value="PENTACOTRIPEPTIDE-REPEAT REGION OF PRORP DOMAIN-CONTAINING PROTEIN"/>
    <property type="match status" value="1"/>
</dbReference>
<dbReference type="Pfam" id="PF02390">
    <property type="entry name" value="Methyltransf_4"/>
    <property type="match status" value="1"/>
</dbReference>
<dbReference type="SUPFAM" id="SSF53335">
    <property type="entry name" value="S-adenosyl-L-methionine-dependent methyltransferases"/>
    <property type="match status" value="1"/>
</dbReference>
<dbReference type="PROSITE" id="PS51625">
    <property type="entry name" value="SAM_MT_TRMB"/>
    <property type="match status" value="1"/>
</dbReference>
<reference key="1">
    <citation type="journal article" date="2007" name="PLoS Genet.">
        <title>Meningococcal genetic variation mechanisms viewed through comparative analysis of serogroup C strain FAM18.</title>
        <authorList>
            <person name="Bentley S.D."/>
            <person name="Vernikos G.S."/>
            <person name="Snyder L.A.S."/>
            <person name="Churcher C."/>
            <person name="Arrowsmith C."/>
            <person name="Chillingworth T."/>
            <person name="Cronin A."/>
            <person name="Davis P.H."/>
            <person name="Holroyd N.E."/>
            <person name="Jagels K."/>
            <person name="Maddison M."/>
            <person name="Moule S."/>
            <person name="Rabbinowitsch E."/>
            <person name="Sharp S."/>
            <person name="Unwin L."/>
            <person name="Whitehead S."/>
            <person name="Quail M.A."/>
            <person name="Achtman M."/>
            <person name="Barrell B.G."/>
            <person name="Saunders N.J."/>
            <person name="Parkhill J."/>
        </authorList>
    </citation>
    <scope>NUCLEOTIDE SEQUENCE [LARGE SCALE GENOMIC DNA]</scope>
    <source>
        <strain>ATCC 700532 / DSM 15464 / FAM18</strain>
    </source>
</reference>
<accession>A1KUF5</accession>
<keyword id="KW-0489">Methyltransferase</keyword>
<keyword id="KW-0949">S-adenosyl-L-methionine</keyword>
<keyword id="KW-0808">Transferase</keyword>
<keyword id="KW-0819">tRNA processing</keyword>
<gene>
    <name evidence="2" type="primary">trmB</name>
    <name type="ordered locus">NMC1267</name>
</gene>